<feature type="chain" id="PRO_1000048736" description="Chromosomal replication initiator protein DnaA">
    <location>
        <begin position="1"/>
        <end position="455"/>
    </location>
</feature>
<feature type="region of interest" description="Domain I, interacts with DnaA modulators" evidence="1">
    <location>
        <begin position="1"/>
        <end position="74"/>
    </location>
</feature>
<feature type="region of interest" description="Domain II" evidence="1">
    <location>
        <begin position="74"/>
        <end position="116"/>
    </location>
</feature>
<feature type="region of interest" description="Disordered" evidence="2">
    <location>
        <begin position="85"/>
        <end position="104"/>
    </location>
</feature>
<feature type="region of interest" description="Domain III, AAA+ region" evidence="1">
    <location>
        <begin position="117"/>
        <end position="333"/>
    </location>
</feature>
<feature type="region of interest" description="Domain IV, binds dsDNA" evidence="1">
    <location>
        <begin position="334"/>
        <end position="455"/>
    </location>
</feature>
<feature type="compositionally biased region" description="Basic and acidic residues" evidence="2">
    <location>
        <begin position="85"/>
        <end position="95"/>
    </location>
</feature>
<feature type="binding site" evidence="1">
    <location>
        <position position="161"/>
    </location>
    <ligand>
        <name>ATP</name>
        <dbReference type="ChEBI" id="CHEBI:30616"/>
    </ligand>
</feature>
<feature type="binding site" evidence="1">
    <location>
        <position position="163"/>
    </location>
    <ligand>
        <name>ATP</name>
        <dbReference type="ChEBI" id="CHEBI:30616"/>
    </ligand>
</feature>
<feature type="binding site" evidence="1">
    <location>
        <position position="164"/>
    </location>
    <ligand>
        <name>ATP</name>
        <dbReference type="ChEBI" id="CHEBI:30616"/>
    </ligand>
</feature>
<feature type="binding site" evidence="1">
    <location>
        <position position="165"/>
    </location>
    <ligand>
        <name>ATP</name>
        <dbReference type="ChEBI" id="CHEBI:30616"/>
    </ligand>
</feature>
<evidence type="ECO:0000255" key="1">
    <source>
        <dbReference type="HAMAP-Rule" id="MF_00377"/>
    </source>
</evidence>
<evidence type="ECO:0000256" key="2">
    <source>
        <dbReference type="SAM" id="MobiDB-lite"/>
    </source>
</evidence>
<sequence length="455" mass="52210">MSEQEIWEKVLTLAQEKVSSASYQTFLKDTKLFKLQNEQAIVVTDDDFVANWLKMNYAEIIKAALYEAIGHEIAPVFYTEEELKSLHTSEQKEENQPEQPAKKYTPGVDEAVIGGEQFNTHNTFETFVIGPGNRFPHAASLAVAEAPAKAYNPLFIYGGVGLGKTHLMHAIGHYVLDNNPDAKVIYTSSEKFTNEFIKSIRDNKTERFREKYRNIDVLLIDDIQFIQNKEQTQEEFFHTFNELHQANKQIVISSDRPPKEIAKLEDRLRSRFEWGLIVDITPPDYETRMAILQKKIGEENLNIPTEALTYIANQIQSNIRELEGALTRVLAFSKLQGQPITTELTAEALKDIIQAPKSKKITIQDIQKIVGQYYSVRIEDFSAKKRTKSIAYPRQIAMYLSRELTDFSLPKIGEEFGGRDHTTVIHAHEKIVKDIQNDPTFKQEVENLEKEIRNQ</sequence>
<keyword id="KW-0067">ATP-binding</keyword>
<keyword id="KW-0963">Cytoplasm</keyword>
<keyword id="KW-0235">DNA replication</keyword>
<keyword id="KW-0238">DNA-binding</keyword>
<keyword id="KW-0446">Lipid-binding</keyword>
<keyword id="KW-0547">Nucleotide-binding</keyword>
<keyword id="KW-1185">Reference proteome</keyword>
<gene>
    <name evidence="1" type="primary">dnaA</name>
    <name type="ordered locus">SSP0001</name>
</gene>
<comment type="function">
    <text evidence="1">Plays an essential role in the initiation and regulation of chromosomal replication. ATP-DnaA binds to the origin of replication (oriC) to initiate formation of the DNA replication initiation complex once per cell cycle. Binds the DnaA box (a 9 base pair repeat at the origin) and separates the double-stranded (ds)DNA. Forms a right-handed helical filament on oriC DNA; dsDNA binds to the exterior of the filament while single-stranded (ss)DNA is stabiized in the filament's interior. The ATP-DnaA-oriC complex binds and stabilizes one strand of the AT-rich DNA unwinding element (DUE), permitting loading of DNA polymerase. After initiation quickly degrades to an ADP-DnaA complex that is not apt for DNA replication. Binds acidic phospholipids.</text>
</comment>
<comment type="subunit">
    <text evidence="1">Oligomerizes as a right-handed, spiral filament on DNA at oriC.</text>
</comment>
<comment type="subcellular location">
    <subcellularLocation>
        <location evidence="1">Cytoplasm</location>
    </subcellularLocation>
</comment>
<comment type="domain">
    <text evidence="1">Domain I is involved in oligomerization and binding regulators, domain II is flexibile and of varying length in different bacteria, domain III forms the AAA+ region, while domain IV binds dsDNA.</text>
</comment>
<comment type="similarity">
    <text evidence="1">Belongs to the DnaA family.</text>
</comment>
<protein>
    <recommendedName>
        <fullName evidence="1">Chromosomal replication initiator protein DnaA</fullName>
    </recommendedName>
</protein>
<accession>Q4A180</accession>
<organism>
    <name type="scientific">Staphylococcus saprophyticus subsp. saprophyticus (strain ATCC 15305 / DSM 20229 / NCIMB 8711 / NCTC 7292 / S-41)</name>
    <dbReference type="NCBI Taxonomy" id="342451"/>
    <lineage>
        <taxon>Bacteria</taxon>
        <taxon>Bacillati</taxon>
        <taxon>Bacillota</taxon>
        <taxon>Bacilli</taxon>
        <taxon>Bacillales</taxon>
        <taxon>Staphylococcaceae</taxon>
        <taxon>Staphylococcus</taxon>
    </lineage>
</organism>
<name>DNAA_STAS1</name>
<reference key="1">
    <citation type="journal article" date="2005" name="Proc. Natl. Acad. Sci. U.S.A.">
        <title>Whole genome sequence of Staphylococcus saprophyticus reveals the pathogenesis of uncomplicated urinary tract infection.</title>
        <authorList>
            <person name="Kuroda M."/>
            <person name="Yamashita A."/>
            <person name="Hirakawa H."/>
            <person name="Kumano M."/>
            <person name="Morikawa K."/>
            <person name="Higashide M."/>
            <person name="Maruyama A."/>
            <person name="Inose Y."/>
            <person name="Matoba K."/>
            <person name="Toh H."/>
            <person name="Kuhara S."/>
            <person name="Hattori M."/>
            <person name="Ohta T."/>
        </authorList>
    </citation>
    <scope>NUCLEOTIDE SEQUENCE [LARGE SCALE GENOMIC DNA]</scope>
    <source>
        <strain>ATCC 15305 / DSM 20229 / NCIMB 8711 / NCTC 7292 / S-41</strain>
    </source>
</reference>
<dbReference type="EMBL" id="AP008934">
    <property type="protein sequence ID" value="BAE17146.1"/>
    <property type="molecule type" value="Genomic_DNA"/>
</dbReference>
<dbReference type="RefSeq" id="WP_002481962.1">
    <property type="nucleotide sequence ID" value="NZ_MTGA01000035.1"/>
</dbReference>
<dbReference type="SMR" id="Q4A180"/>
<dbReference type="GeneID" id="3615456"/>
<dbReference type="KEGG" id="ssp:SSP0001"/>
<dbReference type="eggNOG" id="COG0593">
    <property type="taxonomic scope" value="Bacteria"/>
</dbReference>
<dbReference type="HOGENOM" id="CLU_026910_3_1_9"/>
<dbReference type="OrthoDB" id="9807019at2"/>
<dbReference type="Proteomes" id="UP000006371">
    <property type="component" value="Chromosome"/>
</dbReference>
<dbReference type="GO" id="GO:0005737">
    <property type="term" value="C:cytoplasm"/>
    <property type="evidence" value="ECO:0007669"/>
    <property type="project" value="UniProtKB-SubCell"/>
</dbReference>
<dbReference type="GO" id="GO:0005886">
    <property type="term" value="C:plasma membrane"/>
    <property type="evidence" value="ECO:0007669"/>
    <property type="project" value="TreeGrafter"/>
</dbReference>
<dbReference type="GO" id="GO:0005524">
    <property type="term" value="F:ATP binding"/>
    <property type="evidence" value="ECO:0007669"/>
    <property type="project" value="UniProtKB-UniRule"/>
</dbReference>
<dbReference type="GO" id="GO:0016887">
    <property type="term" value="F:ATP hydrolysis activity"/>
    <property type="evidence" value="ECO:0007669"/>
    <property type="project" value="InterPro"/>
</dbReference>
<dbReference type="GO" id="GO:0003688">
    <property type="term" value="F:DNA replication origin binding"/>
    <property type="evidence" value="ECO:0007669"/>
    <property type="project" value="UniProtKB-UniRule"/>
</dbReference>
<dbReference type="GO" id="GO:0008289">
    <property type="term" value="F:lipid binding"/>
    <property type="evidence" value="ECO:0007669"/>
    <property type="project" value="UniProtKB-KW"/>
</dbReference>
<dbReference type="GO" id="GO:0006270">
    <property type="term" value="P:DNA replication initiation"/>
    <property type="evidence" value="ECO:0007669"/>
    <property type="project" value="UniProtKB-UniRule"/>
</dbReference>
<dbReference type="GO" id="GO:0006275">
    <property type="term" value="P:regulation of DNA replication"/>
    <property type="evidence" value="ECO:0007669"/>
    <property type="project" value="UniProtKB-UniRule"/>
</dbReference>
<dbReference type="CDD" id="cd00009">
    <property type="entry name" value="AAA"/>
    <property type="match status" value="1"/>
</dbReference>
<dbReference type="CDD" id="cd06571">
    <property type="entry name" value="Bac_DnaA_C"/>
    <property type="match status" value="1"/>
</dbReference>
<dbReference type="FunFam" id="1.10.1750.10:FF:000003">
    <property type="entry name" value="Chromosomal replication initiator protein DnaA"/>
    <property type="match status" value="1"/>
</dbReference>
<dbReference type="FunFam" id="1.10.8.60:FF:000003">
    <property type="entry name" value="Chromosomal replication initiator protein DnaA"/>
    <property type="match status" value="1"/>
</dbReference>
<dbReference type="FunFam" id="3.40.50.300:FF:000150">
    <property type="entry name" value="Chromosomal replication initiator protein DnaA"/>
    <property type="match status" value="1"/>
</dbReference>
<dbReference type="Gene3D" id="1.10.1750.10">
    <property type="match status" value="1"/>
</dbReference>
<dbReference type="Gene3D" id="1.10.8.60">
    <property type="match status" value="1"/>
</dbReference>
<dbReference type="Gene3D" id="3.30.300.180">
    <property type="match status" value="1"/>
</dbReference>
<dbReference type="Gene3D" id="3.40.50.300">
    <property type="entry name" value="P-loop containing nucleotide triphosphate hydrolases"/>
    <property type="match status" value="1"/>
</dbReference>
<dbReference type="HAMAP" id="MF_00377">
    <property type="entry name" value="DnaA_bact"/>
    <property type="match status" value="1"/>
</dbReference>
<dbReference type="InterPro" id="IPR003593">
    <property type="entry name" value="AAA+_ATPase"/>
</dbReference>
<dbReference type="InterPro" id="IPR001957">
    <property type="entry name" value="Chromosome_initiator_DnaA"/>
</dbReference>
<dbReference type="InterPro" id="IPR020591">
    <property type="entry name" value="Chromosome_initiator_DnaA-like"/>
</dbReference>
<dbReference type="InterPro" id="IPR018312">
    <property type="entry name" value="Chromosome_initiator_DnaA_CS"/>
</dbReference>
<dbReference type="InterPro" id="IPR013159">
    <property type="entry name" value="DnaA_C"/>
</dbReference>
<dbReference type="InterPro" id="IPR013317">
    <property type="entry name" value="DnaA_dom"/>
</dbReference>
<dbReference type="InterPro" id="IPR024633">
    <property type="entry name" value="DnaA_N_dom"/>
</dbReference>
<dbReference type="InterPro" id="IPR038454">
    <property type="entry name" value="DnaA_N_sf"/>
</dbReference>
<dbReference type="InterPro" id="IPR027417">
    <property type="entry name" value="P-loop_NTPase"/>
</dbReference>
<dbReference type="InterPro" id="IPR010921">
    <property type="entry name" value="Trp_repressor/repl_initiator"/>
</dbReference>
<dbReference type="NCBIfam" id="TIGR00362">
    <property type="entry name" value="DnaA"/>
    <property type="match status" value="1"/>
</dbReference>
<dbReference type="NCBIfam" id="NF010686">
    <property type="entry name" value="PRK14086.1"/>
    <property type="match status" value="1"/>
</dbReference>
<dbReference type="PANTHER" id="PTHR30050">
    <property type="entry name" value="CHROMOSOMAL REPLICATION INITIATOR PROTEIN DNAA"/>
    <property type="match status" value="1"/>
</dbReference>
<dbReference type="PANTHER" id="PTHR30050:SF2">
    <property type="entry name" value="CHROMOSOMAL REPLICATION INITIATOR PROTEIN DNAA"/>
    <property type="match status" value="1"/>
</dbReference>
<dbReference type="Pfam" id="PF00308">
    <property type="entry name" value="Bac_DnaA"/>
    <property type="match status" value="1"/>
</dbReference>
<dbReference type="Pfam" id="PF08299">
    <property type="entry name" value="Bac_DnaA_C"/>
    <property type="match status" value="1"/>
</dbReference>
<dbReference type="Pfam" id="PF11638">
    <property type="entry name" value="DnaA_N"/>
    <property type="match status" value="1"/>
</dbReference>
<dbReference type="PRINTS" id="PR00051">
    <property type="entry name" value="DNAA"/>
</dbReference>
<dbReference type="SMART" id="SM00382">
    <property type="entry name" value="AAA"/>
    <property type="match status" value="1"/>
</dbReference>
<dbReference type="SMART" id="SM00760">
    <property type="entry name" value="Bac_DnaA_C"/>
    <property type="match status" value="1"/>
</dbReference>
<dbReference type="SUPFAM" id="SSF52540">
    <property type="entry name" value="P-loop containing nucleoside triphosphate hydrolases"/>
    <property type="match status" value="1"/>
</dbReference>
<dbReference type="SUPFAM" id="SSF48295">
    <property type="entry name" value="TrpR-like"/>
    <property type="match status" value="1"/>
</dbReference>
<dbReference type="PROSITE" id="PS01008">
    <property type="entry name" value="DNAA"/>
    <property type="match status" value="1"/>
</dbReference>
<proteinExistence type="inferred from homology"/>